<organism>
    <name type="scientific">Acinetobacter baumannii (strain AB0057)</name>
    <dbReference type="NCBI Taxonomy" id="480119"/>
    <lineage>
        <taxon>Bacteria</taxon>
        <taxon>Pseudomonadati</taxon>
        <taxon>Pseudomonadota</taxon>
        <taxon>Gammaproteobacteria</taxon>
        <taxon>Moraxellales</taxon>
        <taxon>Moraxellaceae</taxon>
        <taxon>Acinetobacter</taxon>
        <taxon>Acinetobacter calcoaceticus/baumannii complex</taxon>
    </lineage>
</organism>
<comment type="function">
    <text evidence="1">One of the proteins required for the normal export of preproteins out of the cell cytoplasm. It is a molecular chaperone that binds to a subset of precursor proteins, maintaining them in a translocation-competent state. It also specifically binds to its receptor SecA.</text>
</comment>
<comment type="subunit">
    <text evidence="1">Homotetramer, a dimer of dimers. One homotetramer interacts with 1 SecA dimer.</text>
</comment>
<comment type="subcellular location">
    <subcellularLocation>
        <location evidence="1">Cytoplasm</location>
    </subcellularLocation>
</comment>
<comment type="similarity">
    <text evidence="1">Belongs to the SecB family.</text>
</comment>
<dbReference type="EMBL" id="CP001182">
    <property type="protein sequence ID" value="ACJ40031.1"/>
    <property type="molecule type" value="Genomic_DNA"/>
</dbReference>
<dbReference type="RefSeq" id="WP_001288260.1">
    <property type="nucleotide sequence ID" value="NC_011586.2"/>
</dbReference>
<dbReference type="SMR" id="B7I5H3"/>
<dbReference type="GeneID" id="92892511"/>
<dbReference type="KEGG" id="abn:AB57_0610"/>
<dbReference type="HOGENOM" id="CLU_111574_1_0_6"/>
<dbReference type="Proteomes" id="UP000007094">
    <property type="component" value="Chromosome"/>
</dbReference>
<dbReference type="GO" id="GO:0005737">
    <property type="term" value="C:cytoplasm"/>
    <property type="evidence" value="ECO:0007669"/>
    <property type="project" value="UniProtKB-SubCell"/>
</dbReference>
<dbReference type="GO" id="GO:0051082">
    <property type="term" value="F:unfolded protein binding"/>
    <property type="evidence" value="ECO:0007669"/>
    <property type="project" value="InterPro"/>
</dbReference>
<dbReference type="GO" id="GO:0006457">
    <property type="term" value="P:protein folding"/>
    <property type="evidence" value="ECO:0007669"/>
    <property type="project" value="UniProtKB-UniRule"/>
</dbReference>
<dbReference type="GO" id="GO:0051262">
    <property type="term" value="P:protein tetramerization"/>
    <property type="evidence" value="ECO:0007669"/>
    <property type="project" value="InterPro"/>
</dbReference>
<dbReference type="GO" id="GO:0015031">
    <property type="term" value="P:protein transport"/>
    <property type="evidence" value="ECO:0007669"/>
    <property type="project" value="UniProtKB-UniRule"/>
</dbReference>
<dbReference type="Gene3D" id="3.10.420.10">
    <property type="entry name" value="SecB-like"/>
    <property type="match status" value="1"/>
</dbReference>
<dbReference type="HAMAP" id="MF_00821">
    <property type="entry name" value="SecB"/>
    <property type="match status" value="1"/>
</dbReference>
<dbReference type="InterPro" id="IPR003708">
    <property type="entry name" value="SecB"/>
</dbReference>
<dbReference type="InterPro" id="IPR035958">
    <property type="entry name" value="SecB-like_sf"/>
</dbReference>
<dbReference type="NCBIfam" id="NF004393">
    <property type="entry name" value="PRK05751.1-4"/>
    <property type="match status" value="1"/>
</dbReference>
<dbReference type="NCBIfam" id="TIGR00809">
    <property type="entry name" value="secB"/>
    <property type="match status" value="1"/>
</dbReference>
<dbReference type="PANTHER" id="PTHR36918">
    <property type="match status" value="1"/>
</dbReference>
<dbReference type="PANTHER" id="PTHR36918:SF1">
    <property type="entry name" value="PROTEIN-EXPORT PROTEIN SECB"/>
    <property type="match status" value="1"/>
</dbReference>
<dbReference type="Pfam" id="PF02556">
    <property type="entry name" value="SecB"/>
    <property type="match status" value="1"/>
</dbReference>
<dbReference type="PRINTS" id="PR01594">
    <property type="entry name" value="SECBCHAPRONE"/>
</dbReference>
<dbReference type="SUPFAM" id="SSF54611">
    <property type="entry name" value="SecB-like"/>
    <property type="match status" value="1"/>
</dbReference>
<gene>
    <name evidence="1" type="primary">secB</name>
    <name type="ordered locus">AB57_0610</name>
</gene>
<evidence type="ECO:0000255" key="1">
    <source>
        <dbReference type="HAMAP-Rule" id="MF_00821"/>
    </source>
</evidence>
<accession>B7I5H3</accession>
<reference key="1">
    <citation type="journal article" date="2008" name="J. Bacteriol.">
        <title>Comparative genome sequence analysis of multidrug-resistant Acinetobacter baumannii.</title>
        <authorList>
            <person name="Adams M.D."/>
            <person name="Goglin K."/>
            <person name="Molyneaux N."/>
            <person name="Hujer K.M."/>
            <person name="Lavender H."/>
            <person name="Jamison J.J."/>
            <person name="MacDonald I.J."/>
            <person name="Martin K.M."/>
            <person name="Russo T."/>
            <person name="Campagnari A.A."/>
            <person name="Hujer A.M."/>
            <person name="Bonomo R.A."/>
            <person name="Gill S.R."/>
        </authorList>
    </citation>
    <scope>NUCLEOTIDE SEQUENCE [LARGE SCALE GENOMIC DNA]</scope>
    <source>
        <strain>AB0057</strain>
    </source>
</reference>
<keyword id="KW-0143">Chaperone</keyword>
<keyword id="KW-0963">Cytoplasm</keyword>
<keyword id="KW-0653">Protein transport</keyword>
<keyword id="KW-0811">Translocation</keyword>
<keyword id="KW-0813">Transport</keyword>
<sequence length="152" mass="17030">MSEEQQVQPQLALERIYTKDISFEVPGAQVFTKQWQPELNINLSSAAEKIDPTHFEVSLKVVVQANNDNETAFIVDVTQSGIFLIDNIEEDRLPYILGAYCPNILFPFLREAVNDLVTKGSFPQLLLTPINFDAEFEANMQRAQAAAVEGQA</sequence>
<protein>
    <recommendedName>
        <fullName evidence="1">Protein-export protein SecB</fullName>
    </recommendedName>
</protein>
<feature type="chain" id="PRO_1000134354" description="Protein-export protein SecB">
    <location>
        <begin position="1"/>
        <end position="152"/>
    </location>
</feature>
<name>SECB_ACIB5</name>
<proteinExistence type="inferred from homology"/>